<dbReference type="EC" id="2.1.1.195" evidence="1"/>
<dbReference type="EMBL" id="BA000045">
    <property type="protein sequence ID" value="BAC89570.1"/>
    <property type="molecule type" value="Genomic_DNA"/>
</dbReference>
<dbReference type="RefSeq" id="NP_924575.1">
    <property type="nucleotide sequence ID" value="NC_005125.1"/>
</dbReference>
<dbReference type="RefSeq" id="WP_011141628.1">
    <property type="nucleotide sequence ID" value="NC_005125.1"/>
</dbReference>
<dbReference type="SMR" id="Q7NK51"/>
<dbReference type="STRING" id="251221.gene:10759119"/>
<dbReference type="EnsemblBacteria" id="BAC89570">
    <property type="protein sequence ID" value="BAC89570"/>
    <property type="gene ID" value="BAC89570"/>
</dbReference>
<dbReference type="KEGG" id="gvi:gll1629"/>
<dbReference type="PATRIC" id="fig|251221.4.peg.1665"/>
<dbReference type="eggNOG" id="COG1903">
    <property type="taxonomic scope" value="Bacteria"/>
</dbReference>
<dbReference type="HOGENOM" id="CLU_041273_1_2_3"/>
<dbReference type="InParanoid" id="Q7NK51"/>
<dbReference type="OrthoDB" id="6439987at2"/>
<dbReference type="PhylomeDB" id="Q7NK51"/>
<dbReference type="UniPathway" id="UPA00148">
    <property type="reaction ID" value="UER00227"/>
</dbReference>
<dbReference type="Proteomes" id="UP000000557">
    <property type="component" value="Chromosome"/>
</dbReference>
<dbReference type="GO" id="GO:0043780">
    <property type="term" value="F:cobalt-precorrin-5B C1-methyltransferase activity"/>
    <property type="evidence" value="ECO:0007669"/>
    <property type="project" value="RHEA"/>
</dbReference>
<dbReference type="GO" id="GO:0019251">
    <property type="term" value="P:anaerobic cobalamin biosynthetic process"/>
    <property type="evidence" value="ECO:0007669"/>
    <property type="project" value="UniProtKB-UniRule"/>
</dbReference>
<dbReference type="GO" id="GO:0032259">
    <property type="term" value="P:methylation"/>
    <property type="evidence" value="ECO:0007669"/>
    <property type="project" value="UniProtKB-KW"/>
</dbReference>
<dbReference type="Gene3D" id="3.30.2110.10">
    <property type="entry name" value="CbiD-like"/>
    <property type="match status" value="1"/>
</dbReference>
<dbReference type="HAMAP" id="MF_00787">
    <property type="entry name" value="CbiD"/>
    <property type="match status" value="1"/>
</dbReference>
<dbReference type="InterPro" id="IPR002748">
    <property type="entry name" value="CbiD"/>
</dbReference>
<dbReference type="InterPro" id="IPR036074">
    <property type="entry name" value="CbiD_sf"/>
</dbReference>
<dbReference type="NCBIfam" id="TIGR00312">
    <property type="entry name" value="cbiD"/>
    <property type="match status" value="1"/>
</dbReference>
<dbReference type="PANTHER" id="PTHR35863">
    <property type="entry name" value="COBALT-PRECORRIN-5B C(1)-METHYLTRANSFERASE"/>
    <property type="match status" value="1"/>
</dbReference>
<dbReference type="PANTHER" id="PTHR35863:SF1">
    <property type="entry name" value="COBALT-PRECORRIN-5B C(1)-METHYLTRANSFERASE"/>
    <property type="match status" value="1"/>
</dbReference>
<dbReference type="Pfam" id="PF01888">
    <property type="entry name" value="CbiD"/>
    <property type="match status" value="1"/>
</dbReference>
<dbReference type="PIRSF" id="PIRSF026782">
    <property type="entry name" value="CbiD"/>
    <property type="match status" value="1"/>
</dbReference>
<dbReference type="SUPFAM" id="SSF111342">
    <property type="entry name" value="CbiD-like"/>
    <property type="match status" value="1"/>
</dbReference>
<comment type="function">
    <text evidence="1">Catalyzes the methylation of C-1 in cobalt-precorrin-5B to form cobalt-precorrin-6A.</text>
</comment>
<comment type="catalytic activity">
    <reaction evidence="1">
        <text>Co-precorrin-5B + S-adenosyl-L-methionine = Co-precorrin-6A + S-adenosyl-L-homocysteine</text>
        <dbReference type="Rhea" id="RHEA:26285"/>
        <dbReference type="ChEBI" id="CHEBI:57856"/>
        <dbReference type="ChEBI" id="CHEBI:59789"/>
        <dbReference type="ChEBI" id="CHEBI:60063"/>
        <dbReference type="ChEBI" id="CHEBI:60064"/>
        <dbReference type="EC" id="2.1.1.195"/>
    </reaction>
</comment>
<comment type="pathway">
    <text evidence="1">Cofactor biosynthesis; adenosylcobalamin biosynthesis; cob(II)yrinate a,c-diamide from sirohydrochlorin (anaerobic route): step 6/10.</text>
</comment>
<comment type="similarity">
    <text evidence="1">Belongs to the CbiD family.</text>
</comment>
<accession>Q7NK51</accession>
<evidence type="ECO:0000255" key="1">
    <source>
        <dbReference type="HAMAP-Rule" id="MF_00787"/>
    </source>
</evidence>
<sequence length="357" mass="37549">MSRTGYTLPVFAAAAARAALLHLIEKVPCASVQLDLLGEQAAIPIEQVARLDAETALGVTRSDPGDNLDLTRHTPVWAWVHLEVGTGEVLRLEAGEGLGRTAAGEAAIYRYARQLMEANVAPLVPTGRTATVRFILPEGRALALRTSNAAFGILEGLALLGTSGLSQPLSAADHLESFRAALRERAERERRLVFCIGAGGLQAAGRLGLDQGATVQTGNWIGALLVEAGMLGIESVLLLGYQGKLVKLAAGIFNTSSHVADGRLETIAAGAVAAGADIETVRTVLEAPTADAACALLAAAGWAEKIYAALAERVSGRSVEYVRKYTERTMAVATMLLDRQGRVIARDRAAAEWLAEP</sequence>
<organism>
    <name type="scientific">Gloeobacter violaceus (strain ATCC 29082 / PCC 7421)</name>
    <dbReference type="NCBI Taxonomy" id="251221"/>
    <lineage>
        <taxon>Bacteria</taxon>
        <taxon>Bacillati</taxon>
        <taxon>Cyanobacteriota</taxon>
        <taxon>Cyanophyceae</taxon>
        <taxon>Gloeobacterales</taxon>
        <taxon>Gloeobacteraceae</taxon>
        <taxon>Gloeobacter</taxon>
    </lineage>
</organism>
<feature type="chain" id="PRO_0000141667" description="Cobalt-precorrin-5B C(1)-methyltransferase">
    <location>
        <begin position="1"/>
        <end position="357"/>
    </location>
</feature>
<keyword id="KW-0169">Cobalamin biosynthesis</keyword>
<keyword id="KW-0489">Methyltransferase</keyword>
<keyword id="KW-1185">Reference proteome</keyword>
<keyword id="KW-0949">S-adenosyl-L-methionine</keyword>
<keyword id="KW-0808">Transferase</keyword>
<gene>
    <name evidence="1" type="primary">cbiD</name>
    <name type="ordered locus">gll1629</name>
</gene>
<protein>
    <recommendedName>
        <fullName evidence="1">Cobalt-precorrin-5B C(1)-methyltransferase</fullName>
        <ecNumber evidence="1">2.1.1.195</ecNumber>
    </recommendedName>
    <alternativeName>
        <fullName evidence="1">Cobalt-precorrin-6A synthase</fullName>
    </alternativeName>
</protein>
<name>CBID_GLOVI</name>
<reference key="1">
    <citation type="journal article" date="2003" name="DNA Res.">
        <title>Complete genome structure of Gloeobacter violaceus PCC 7421, a cyanobacterium that lacks thylakoids.</title>
        <authorList>
            <person name="Nakamura Y."/>
            <person name="Kaneko T."/>
            <person name="Sato S."/>
            <person name="Mimuro M."/>
            <person name="Miyashita H."/>
            <person name="Tsuchiya T."/>
            <person name="Sasamoto S."/>
            <person name="Watanabe A."/>
            <person name="Kawashima K."/>
            <person name="Kishida Y."/>
            <person name="Kiyokawa C."/>
            <person name="Kohara M."/>
            <person name="Matsumoto M."/>
            <person name="Matsuno A."/>
            <person name="Nakazaki N."/>
            <person name="Shimpo S."/>
            <person name="Takeuchi C."/>
            <person name="Yamada M."/>
            <person name="Tabata S."/>
        </authorList>
    </citation>
    <scope>NUCLEOTIDE SEQUENCE [LARGE SCALE GENOMIC DNA]</scope>
    <source>
        <strain>ATCC 29082 / PCC 7421</strain>
    </source>
</reference>
<proteinExistence type="inferred from homology"/>